<comment type="function">
    <text evidence="1">Intracellular monovalent cation channel required for maintenance of rapid intracellular calcium release. Acts as a potassium counter-ion channel that functions in synchronization with calcium release from intracellular stores (By similarity). Activated by increased cytosolic Ca(2+) levels (By similarity).</text>
</comment>
<comment type="catalytic activity">
    <reaction evidence="1">
        <text>K(+)(in) = K(+)(out)</text>
        <dbReference type="Rhea" id="RHEA:29463"/>
        <dbReference type="ChEBI" id="CHEBI:29103"/>
    </reaction>
</comment>
<comment type="activity regulation">
    <text evidence="1">Channel activity is activated by increased cytosolic Ca(2+) levels and blocked by luminal high Ca(2+) levels.</text>
</comment>
<comment type="subunit">
    <text evidence="1">Homotrimer; conformation seems to be controled by binding to diacylglycerol (DAG).</text>
</comment>
<comment type="interaction">
    <interactant intactId="EBI-1055114">
        <id>Q9NVV0</id>
    </interactant>
    <interactant intactId="EBI-745213">
        <id>P29972</id>
        <label>AQP1</label>
    </interactant>
    <organismsDiffer>false</organismsDiffer>
    <experiments>3</experiments>
</comment>
<comment type="subcellular location">
    <subcellularLocation>
        <location evidence="2">Endoplasmic reticulum membrane</location>
        <topology evidence="2">Multi-pass membrane protein</topology>
    </subcellularLocation>
</comment>
<comment type="disease" evidence="6 7 8">
    <disease id="DI-03686">
        <name>Osteogenesis imperfecta 14</name>
        <acronym>OI14</acronym>
        <description>An autosomal recessive form of osteogenesis imperfecta, a disorder of bone formation characterized by low bone mass, bone fragility and susceptibility to fractures after minimal trauma. Disease severity ranges from very mild forms without fractures to intrauterine fractures and perinatal lethality. Extraskeletal manifestations, which affect a variable number of patients, are dentinogenesis imperfecta, hearing loss, and blue sclerae. OI14 is characterized by variable degrees of severity of multiple fractures and osteopenia, with normal teeth, sclerae, and hearing. Fractures first occur prenatally or by age 6 years.</description>
        <dbReference type="MIM" id="615066"/>
    </disease>
    <text>The disease is caused by variants affecting the gene represented in this entry.</text>
</comment>
<comment type="similarity">
    <text evidence="10">Belongs to the TMEM38 family.</text>
</comment>
<keyword id="KW-0256">Endoplasmic reticulum</keyword>
<keyword id="KW-0407">Ion channel</keyword>
<keyword id="KW-0406">Ion transport</keyword>
<keyword id="KW-0472">Membrane</keyword>
<keyword id="KW-1065">Osteogenesis imperfecta</keyword>
<keyword id="KW-0597">Phosphoprotein</keyword>
<keyword id="KW-0630">Potassium</keyword>
<keyword id="KW-0631">Potassium channel</keyword>
<keyword id="KW-0633">Potassium transport</keyword>
<keyword id="KW-1267">Proteomics identification</keyword>
<keyword id="KW-1185">Reference proteome</keyword>
<keyword id="KW-0812">Transmembrane</keyword>
<keyword id="KW-1133">Transmembrane helix</keyword>
<keyword id="KW-0813">Transport</keyword>
<feature type="chain" id="PRO_0000291524" description="Trimeric intracellular cation channel type B">
    <location>
        <begin position="1"/>
        <end position="291"/>
    </location>
</feature>
<feature type="topological domain" description="Lumenal" evidence="10">
    <location>
        <begin position="1"/>
        <end position="19"/>
    </location>
</feature>
<feature type="transmembrane region" description="Helical;Name=1" evidence="4">
    <location>
        <begin position="20"/>
        <end position="33"/>
    </location>
</feature>
<feature type="topological domain" description="Cytoplasmic" evidence="10">
    <location>
        <begin position="34"/>
        <end position="50"/>
    </location>
</feature>
<feature type="transmembrane region" description="Helical;Name=2" evidence="4">
    <location>
        <begin position="51"/>
        <end position="70"/>
    </location>
</feature>
<feature type="topological domain" description="Lumenal" evidence="10">
    <location>
        <begin position="71"/>
        <end position="82"/>
    </location>
</feature>
<feature type="transmembrane region" description="Helical;Name=3" evidence="4">
    <location>
        <begin position="83"/>
        <end position="99"/>
    </location>
</feature>
<feature type="topological domain" description="Cytoplasmic" evidence="10">
    <location>
        <begin position="100"/>
        <end position="104"/>
    </location>
</feature>
<feature type="transmembrane region" description="Helical;Name=4" evidence="4">
    <location>
        <begin position="105"/>
        <end position="121"/>
    </location>
</feature>
<feature type="topological domain" description="Lumenal" evidence="10">
    <location>
        <begin position="122"/>
        <end position="139"/>
    </location>
</feature>
<feature type="transmembrane region" description="Helical;Name=5" evidence="4">
    <location>
        <begin position="140"/>
        <end position="156"/>
    </location>
</feature>
<feature type="topological domain" description="Cytoplasmic" evidence="10">
    <location>
        <begin position="157"/>
        <end position="179"/>
    </location>
</feature>
<feature type="transmembrane region" description="Helical;Name=6" evidence="4">
    <location>
        <begin position="180"/>
        <end position="195"/>
    </location>
</feature>
<feature type="topological domain" description="Lumenal" evidence="10">
    <location>
        <begin position="196"/>
        <end position="207"/>
    </location>
</feature>
<feature type="transmembrane region" description="Helical;Name=7" evidence="4">
    <location>
        <begin position="208"/>
        <end position="227"/>
    </location>
</feature>
<feature type="topological domain" description="Cytoplasmic" evidence="10">
    <location>
        <begin position="228"/>
        <end position="291"/>
    </location>
</feature>
<feature type="region of interest" description="Disordered" evidence="5">
    <location>
        <begin position="256"/>
        <end position="291"/>
    </location>
</feature>
<feature type="binding site" evidence="3">
    <location>
        <position position="118"/>
    </location>
    <ligand>
        <name>a 1,2-diacyl-sn-glycero-3-phospho-(1D-myo-inositol-4,5-bisphosphate)</name>
        <dbReference type="ChEBI" id="CHEBI:58456"/>
    </ligand>
</feature>
<feature type="binding site" evidence="3">
    <location>
        <position position="122"/>
    </location>
    <ligand>
        <name>a 1,2-diacyl-sn-glycero-3-phospho-(1D-myo-inositol-4,5-bisphosphate)</name>
        <dbReference type="ChEBI" id="CHEBI:58456"/>
    </ligand>
</feature>
<feature type="modified residue" description="Phosphoserine" evidence="12 13">
    <location>
        <position position="262"/>
    </location>
</feature>
<feature type="sequence variant" id="VAR_089459" description="In OI14; uncertain significance." evidence="8">
    <original>R</original>
    <variation>RVL</variation>
    <location>
        <position position="151"/>
    </location>
</feature>
<feature type="sequence variant" id="VAR_089460" description="In OI14; uncertain significance." evidence="8">
    <location>
        <begin position="169"/>
        <end position="291"/>
    </location>
</feature>
<feature type="sequence variant" id="VAR_032811" description="In dbSNP:rs35232724.">
    <original>C</original>
    <variation>S</variation>
    <location>
        <position position="254"/>
    </location>
</feature>
<feature type="sequence conflict" description="In Ref. 2; CAG33539." evidence="10" ref="2">
    <original>A</original>
    <variation>E</variation>
    <location>
        <position position="32"/>
    </location>
</feature>
<feature type="sequence conflict" description="In Ref. 2; CAG33539." evidence="10" ref="2">
    <original>E</original>
    <variation>D</variation>
    <location>
        <position position="291"/>
    </location>
</feature>
<gene>
    <name evidence="11" type="primary">TMEM38B</name>
    <name type="synonym">C9orf87</name>
    <name evidence="9" type="synonym">TRICB</name>
</gene>
<accession>Q9NVV0</accession>
<accession>Q5JR63</accession>
<accession>Q5SVN5</accession>
<accession>Q5SVN6</accession>
<accession>Q5VTE2</accession>
<accession>Q6IA97</accession>
<protein>
    <recommendedName>
        <fullName evidence="10">Trimeric intracellular cation channel type B</fullName>
        <shortName>TRIC-B</shortName>
        <shortName evidence="9">TRICB</shortName>
    </recommendedName>
    <alternativeName>
        <fullName>Transmembrane protein 38B</fullName>
    </alternativeName>
</protein>
<organism>
    <name type="scientific">Homo sapiens</name>
    <name type="common">Human</name>
    <dbReference type="NCBI Taxonomy" id="9606"/>
    <lineage>
        <taxon>Eukaryota</taxon>
        <taxon>Metazoa</taxon>
        <taxon>Chordata</taxon>
        <taxon>Craniata</taxon>
        <taxon>Vertebrata</taxon>
        <taxon>Euteleostomi</taxon>
        <taxon>Mammalia</taxon>
        <taxon>Eutheria</taxon>
        <taxon>Euarchontoglires</taxon>
        <taxon>Primates</taxon>
        <taxon>Haplorrhini</taxon>
        <taxon>Catarrhini</taxon>
        <taxon>Hominidae</taxon>
        <taxon>Homo</taxon>
    </lineage>
</organism>
<reference key="1">
    <citation type="journal article" date="2004" name="Nat. Genet.">
        <title>Complete sequencing and characterization of 21,243 full-length human cDNAs.</title>
        <authorList>
            <person name="Ota T."/>
            <person name="Suzuki Y."/>
            <person name="Nishikawa T."/>
            <person name="Otsuki T."/>
            <person name="Sugiyama T."/>
            <person name="Irie R."/>
            <person name="Wakamatsu A."/>
            <person name="Hayashi K."/>
            <person name="Sato H."/>
            <person name="Nagai K."/>
            <person name="Kimura K."/>
            <person name="Makita H."/>
            <person name="Sekine M."/>
            <person name="Obayashi M."/>
            <person name="Nishi T."/>
            <person name="Shibahara T."/>
            <person name="Tanaka T."/>
            <person name="Ishii S."/>
            <person name="Yamamoto J."/>
            <person name="Saito K."/>
            <person name="Kawai Y."/>
            <person name="Isono Y."/>
            <person name="Nakamura Y."/>
            <person name="Nagahari K."/>
            <person name="Murakami K."/>
            <person name="Yasuda T."/>
            <person name="Iwayanagi T."/>
            <person name="Wagatsuma M."/>
            <person name="Shiratori A."/>
            <person name="Sudo H."/>
            <person name="Hosoiri T."/>
            <person name="Kaku Y."/>
            <person name="Kodaira H."/>
            <person name="Kondo H."/>
            <person name="Sugawara M."/>
            <person name="Takahashi M."/>
            <person name="Kanda K."/>
            <person name="Yokoi T."/>
            <person name="Furuya T."/>
            <person name="Kikkawa E."/>
            <person name="Omura Y."/>
            <person name="Abe K."/>
            <person name="Kamihara K."/>
            <person name="Katsuta N."/>
            <person name="Sato K."/>
            <person name="Tanikawa M."/>
            <person name="Yamazaki M."/>
            <person name="Ninomiya K."/>
            <person name="Ishibashi T."/>
            <person name="Yamashita H."/>
            <person name="Murakawa K."/>
            <person name="Fujimori K."/>
            <person name="Tanai H."/>
            <person name="Kimata M."/>
            <person name="Watanabe M."/>
            <person name="Hiraoka S."/>
            <person name="Chiba Y."/>
            <person name="Ishida S."/>
            <person name="Ono Y."/>
            <person name="Takiguchi S."/>
            <person name="Watanabe S."/>
            <person name="Yosida M."/>
            <person name="Hotuta T."/>
            <person name="Kusano J."/>
            <person name="Kanehori K."/>
            <person name="Takahashi-Fujii A."/>
            <person name="Hara H."/>
            <person name="Tanase T.-O."/>
            <person name="Nomura Y."/>
            <person name="Togiya S."/>
            <person name="Komai F."/>
            <person name="Hara R."/>
            <person name="Takeuchi K."/>
            <person name="Arita M."/>
            <person name="Imose N."/>
            <person name="Musashino K."/>
            <person name="Yuuki H."/>
            <person name="Oshima A."/>
            <person name="Sasaki N."/>
            <person name="Aotsuka S."/>
            <person name="Yoshikawa Y."/>
            <person name="Matsunawa H."/>
            <person name="Ichihara T."/>
            <person name="Shiohata N."/>
            <person name="Sano S."/>
            <person name="Moriya S."/>
            <person name="Momiyama H."/>
            <person name="Satoh N."/>
            <person name="Takami S."/>
            <person name="Terashima Y."/>
            <person name="Suzuki O."/>
            <person name="Nakagawa S."/>
            <person name="Senoh A."/>
            <person name="Mizoguchi H."/>
            <person name="Goto Y."/>
            <person name="Shimizu F."/>
            <person name="Wakebe H."/>
            <person name="Hishigaki H."/>
            <person name="Watanabe T."/>
            <person name="Sugiyama A."/>
            <person name="Takemoto M."/>
            <person name="Kawakami B."/>
            <person name="Yamazaki M."/>
            <person name="Watanabe K."/>
            <person name="Kumagai A."/>
            <person name="Itakura S."/>
            <person name="Fukuzumi Y."/>
            <person name="Fujimori Y."/>
            <person name="Komiyama M."/>
            <person name="Tashiro H."/>
            <person name="Tanigami A."/>
            <person name="Fujiwara T."/>
            <person name="Ono T."/>
            <person name="Yamada K."/>
            <person name="Fujii Y."/>
            <person name="Ozaki K."/>
            <person name="Hirao M."/>
            <person name="Ohmori Y."/>
            <person name="Kawabata A."/>
            <person name="Hikiji T."/>
            <person name="Kobatake N."/>
            <person name="Inagaki H."/>
            <person name="Ikema Y."/>
            <person name="Okamoto S."/>
            <person name="Okitani R."/>
            <person name="Kawakami T."/>
            <person name="Noguchi S."/>
            <person name="Itoh T."/>
            <person name="Shigeta K."/>
            <person name="Senba T."/>
            <person name="Matsumura K."/>
            <person name="Nakajima Y."/>
            <person name="Mizuno T."/>
            <person name="Morinaga M."/>
            <person name="Sasaki M."/>
            <person name="Togashi T."/>
            <person name="Oyama M."/>
            <person name="Hata H."/>
            <person name="Watanabe M."/>
            <person name="Komatsu T."/>
            <person name="Mizushima-Sugano J."/>
            <person name="Satoh T."/>
            <person name="Shirai Y."/>
            <person name="Takahashi Y."/>
            <person name="Nakagawa K."/>
            <person name="Okumura K."/>
            <person name="Nagase T."/>
            <person name="Nomura N."/>
            <person name="Kikuchi H."/>
            <person name="Masuho Y."/>
            <person name="Yamashita R."/>
            <person name="Nakai K."/>
            <person name="Yada T."/>
            <person name="Nakamura Y."/>
            <person name="Ohara O."/>
            <person name="Isogai T."/>
            <person name="Sugano S."/>
        </authorList>
    </citation>
    <scope>NUCLEOTIDE SEQUENCE [LARGE SCALE MRNA]</scope>
    <source>
        <tissue>Teratocarcinoma</tissue>
    </source>
</reference>
<reference key="2">
    <citation type="submission" date="2004-06" db="EMBL/GenBank/DDBJ databases">
        <title>Cloning of human full open reading frames in Gateway(TM) system entry vector (pDONR201).</title>
        <authorList>
            <person name="Ebert L."/>
            <person name="Schick M."/>
            <person name="Neubert P."/>
            <person name="Schatten R."/>
            <person name="Henze S."/>
            <person name="Korn B."/>
        </authorList>
    </citation>
    <scope>NUCLEOTIDE SEQUENCE [LARGE SCALE MRNA]</scope>
</reference>
<reference key="3">
    <citation type="journal article" date="2004" name="Nature">
        <title>DNA sequence and analysis of human chromosome 9.</title>
        <authorList>
            <person name="Humphray S.J."/>
            <person name="Oliver K."/>
            <person name="Hunt A.R."/>
            <person name="Plumb R.W."/>
            <person name="Loveland J.E."/>
            <person name="Howe K.L."/>
            <person name="Andrews T.D."/>
            <person name="Searle S."/>
            <person name="Hunt S.E."/>
            <person name="Scott C.E."/>
            <person name="Jones M.C."/>
            <person name="Ainscough R."/>
            <person name="Almeida J.P."/>
            <person name="Ambrose K.D."/>
            <person name="Ashwell R.I.S."/>
            <person name="Babbage A.K."/>
            <person name="Babbage S."/>
            <person name="Bagguley C.L."/>
            <person name="Bailey J."/>
            <person name="Banerjee R."/>
            <person name="Barker D.J."/>
            <person name="Barlow K.F."/>
            <person name="Bates K."/>
            <person name="Beasley H."/>
            <person name="Beasley O."/>
            <person name="Bird C.P."/>
            <person name="Bray-Allen S."/>
            <person name="Brown A.J."/>
            <person name="Brown J.Y."/>
            <person name="Burford D."/>
            <person name="Burrill W."/>
            <person name="Burton J."/>
            <person name="Carder C."/>
            <person name="Carter N.P."/>
            <person name="Chapman J.C."/>
            <person name="Chen Y."/>
            <person name="Clarke G."/>
            <person name="Clark S.Y."/>
            <person name="Clee C.M."/>
            <person name="Clegg S."/>
            <person name="Collier R.E."/>
            <person name="Corby N."/>
            <person name="Crosier M."/>
            <person name="Cummings A.T."/>
            <person name="Davies J."/>
            <person name="Dhami P."/>
            <person name="Dunn M."/>
            <person name="Dutta I."/>
            <person name="Dyer L.W."/>
            <person name="Earthrowl M.E."/>
            <person name="Faulkner L."/>
            <person name="Fleming C.J."/>
            <person name="Frankish A."/>
            <person name="Frankland J.A."/>
            <person name="French L."/>
            <person name="Fricker D.G."/>
            <person name="Garner P."/>
            <person name="Garnett J."/>
            <person name="Ghori J."/>
            <person name="Gilbert J.G.R."/>
            <person name="Glison C."/>
            <person name="Grafham D.V."/>
            <person name="Gribble S."/>
            <person name="Griffiths C."/>
            <person name="Griffiths-Jones S."/>
            <person name="Grocock R."/>
            <person name="Guy J."/>
            <person name="Hall R.E."/>
            <person name="Hammond S."/>
            <person name="Harley J.L."/>
            <person name="Harrison E.S.I."/>
            <person name="Hart E.A."/>
            <person name="Heath P.D."/>
            <person name="Henderson C.D."/>
            <person name="Hopkins B.L."/>
            <person name="Howard P.J."/>
            <person name="Howden P.J."/>
            <person name="Huckle E."/>
            <person name="Johnson C."/>
            <person name="Johnson D."/>
            <person name="Joy A.A."/>
            <person name="Kay M."/>
            <person name="Keenan S."/>
            <person name="Kershaw J.K."/>
            <person name="Kimberley A.M."/>
            <person name="King A."/>
            <person name="Knights A."/>
            <person name="Laird G.K."/>
            <person name="Langford C."/>
            <person name="Lawlor S."/>
            <person name="Leongamornlert D.A."/>
            <person name="Leversha M."/>
            <person name="Lloyd C."/>
            <person name="Lloyd D.M."/>
            <person name="Lovell J."/>
            <person name="Martin S."/>
            <person name="Mashreghi-Mohammadi M."/>
            <person name="Matthews L."/>
            <person name="McLaren S."/>
            <person name="McLay K.E."/>
            <person name="McMurray A."/>
            <person name="Milne S."/>
            <person name="Nickerson T."/>
            <person name="Nisbett J."/>
            <person name="Nordsiek G."/>
            <person name="Pearce A.V."/>
            <person name="Peck A.I."/>
            <person name="Porter K.M."/>
            <person name="Pandian R."/>
            <person name="Pelan S."/>
            <person name="Phillimore B."/>
            <person name="Povey S."/>
            <person name="Ramsey Y."/>
            <person name="Rand V."/>
            <person name="Scharfe M."/>
            <person name="Sehra H.K."/>
            <person name="Shownkeen R."/>
            <person name="Sims S.K."/>
            <person name="Skuce C.D."/>
            <person name="Smith M."/>
            <person name="Steward C.A."/>
            <person name="Swarbreck D."/>
            <person name="Sycamore N."/>
            <person name="Tester J."/>
            <person name="Thorpe A."/>
            <person name="Tracey A."/>
            <person name="Tromans A."/>
            <person name="Thomas D.W."/>
            <person name="Wall M."/>
            <person name="Wallis J.M."/>
            <person name="West A.P."/>
            <person name="Whitehead S.L."/>
            <person name="Willey D.L."/>
            <person name="Williams S.A."/>
            <person name="Wilming L."/>
            <person name="Wray P.W."/>
            <person name="Young L."/>
            <person name="Ashurst J.L."/>
            <person name="Coulson A."/>
            <person name="Blocker H."/>
            <person name="Durbin R.M."/>
            <person name="Sulston J.E."/>
            <person name="Hubbard T."/>
            <person name="Jackson M.J."/>
            <person name="Bentley D.R."/>
            <person name="Beck S."/>
            <person name="Rogers J."/>
            <person name="Dunham I."/>
        </authorList>
    </citation>
    <scope>NUCLEOTIDE SEQUENCE [LARGE SCALE GENOMIC DNA]</scope>
</reference>
<reference key="4">
    <citation type="journal article" date="2004" name="Genome Res.">
        <title>The status, quality, and expansion of the NIH full-length cDNA project: the Mammalian Gene Collection (MGC).</title>
        <authorList>
            <consortium name="The MGC Project Team"/>
        </authorList>
    </citation>
    <scope>NUCLEOTIDE SEQUENCE [LARGE SCALE MRNA]</scope>
    <source>
        <tissue>Kidney</tissue>
    </source>
</reference>
<reference key="5">
    <citation type="journal article" date="2008" name="Mol. Cell">
        <title>Kinase-selective enrichment enables quantitative phosphoproteomics of the kinome across the cell cycle.</title>
        <authorList>
            <person name="Daub H."/>
            <person name="Olsen J.V."/>
            <person name="Bairlein M."/>
            <person name="Gnad F."/>
            <person name="Oppermann F.S."/>
            <person name="Korner R."/>
            <person name="Greff Z."/>
            <person name="Keri G."/>
            <person name="Stemmann O."/>
            <person name="Mann M."/>
        </authorList>
    </citation>
    <scope>IDENTIFICATION BY MASS SPECTROMETRY [LARGE SCALE ANALYSIS]</scope>
    <source>
        <tissue>Cervix carcinoma</tissue>
    </source>
</reference>
<reference key="6">
    <citation type="journal article" date="2008" name="Proc. Natl. Acad. Sci. U.S.A.">
        <title>A quantitative atlas of mitotic phosphorylation.</title>
        <authorList>
            <person name="Dephoure N."/>
            <person name="Zhou C."/>
            <person name="Villen J."/>
            <person name="Beausoleil S.A."/>
            <person name="Bakalarski C.E."/>
            <person name="Elledge S.J."/>
            <person name="Gygi S.P."/>
        </authorList>
    </citation>
    <scope>PHOSPHORYLATION [LARGE SCALE ANALYSIS] AT SER-262</scope>
    <scope>IDENTIFICATION BY MASS SPECTROMETRY [LARGE SCALE ANALYSIS]</scope>
    <source>
        <tissue>Cervix carcinoma</tissue>
    </source>
</reference>
<reference key="7">
    <citation type="journal article" date="2010" name="Sci. Signal.">
        <title>Quantitative phosphoproteomics reveals widespread full phosphorylation site occupancy during mitosis.</title>
        <authorList>
            <person name="Olsen J.V."/>
            <person name="Vermeulen M."/>
            <person name="Santamaria A."/>
            <person name="Kumar C."/>
            <person name="Miller M.L."/>
            <person name="Jensen L.J."/>
            <person name="Gnad F."/>
            <person name="Cox J."/>
            <person name="Jensen T.S."/>
            <person name="Nigg E.A."/>
            <person name="Brunak S."/>
            <person name="Mann M."/>
        </authorList>
    </citation>
    <scope>PHOSPHORYLATION [LARGE SCALE ANALYSIS] AT SER-262</scope>
    <scope>IDENTIFICATION BY MASS SPECTROMETRY [LARGE SCALE ANALYSIS]</scope>
    <source>
        <tissue>Cervix carcinoma</tissue>
    </source>
</reference>
<reference key="8">
    <citation type="journal article" date="2011" name="BMC Syst. Biol.">
        <title>Initial characterization of the human central proteome.</title>
        <authorList>
            <person name="Burkard T.R."/>
            <person name="Planyavsky M."/>
            <person name="Kaupe I."/>
            <person name="Breitwieser F.P."/>
            <person name="Buerckstuemmer T."/>
            <person name="Bennett K.L."/>
            <person name="Superti-Furga G."/>
            <person name="Colinge J."/>
        </authorList>
    </citation>
    <scope>IDENTIFICATION BY MASS SPECTROMETRY [LARGE SCALE ANALYSIS]</scope>
</reference>
<reference key="9">
    <citation type="journal article" date="2024" name="Exp. Mol. Med.">
        <title>Transmembrane proteins with unknown function (TMEMs) as ion channels: electrophysiological properties, structure, and pathophysiological roles.</title>
        <authorList>
            <person name="Kang H."/>
            <person name="Lee C.J."/>
        </authorList>
    </citation>
    <scope>REIVIEW OF FUNCTION</scope>
</reference>
<reference key="10">
    <citation type="journal article" date="2012" name="J. Med. Genet.">
        <title>Study of autosomal recessive osteogenesis imperfecta in Arabia reveals a novel locus defined by TMEM38B mutation.</title>
        <authorList>
            <person name="Shaheen R."/>
            <person name="Alazami A.M."/>
            <person name="Alshammari M.J."/>
            <person name="Faqeih E."/>
            <person name="Alhashmi N."/>
            <person name="Mousa N."/>
            <person name="Alsinani A."/>
            <person name="Ansari S."/>
            <person name="Alzahrani F."/>
            <person name="Al-Owain M."/>
            <person name="Alzayed Z.S."/>
            <person name="Alkuraya F.S."/>
        </authorList>
    </citation>
    <scope>INVOLVEMENT IN OI14</scope>
</reference>
<reference key="11">
    <citation type="journal article" date="2013" name="Hum. Mutat.">
        <title>A deletion mutation in TMEM38B associated with autosomal recessive osteogenesis imperfecta.</title>
        <authorList>
            <person name="Volodarsky M."/>
            <person name="Markus B."/>
            <person name="Cohen I."/>
            <person name="Staretz-Chacham O."/>
            <person name="Flusser H."/>
            <person name="Landau D."/>
            <person name="Shelef I."/>
            <person name="Langer Y."/>
            <person name="Birk O.S."/>
        </authorList>
    </citation>
    <scope>INVOLVEMENT IN OI14</scope>
</reference>
<reference key="12">
    <citation type="journal article" date="2016" name="J. Hum. Genet.">
        <title>Two novel mutations in TMEM38B result in rare autosomal recessive osteogenesis imperfecta.</title>
        <authorList>
            <person name="Lv F."/>
            <person name="Xu X.J."/>
            <person name="Wang J.Y."/>
            <person name="Liu Y."/>
            <person name="Asan A."/>
            <person name="Wang J.W."/>
            <person name="Song L.J."/>
            <person name="Song Y.W."/>
            <person name="Jiang Y."/>
            <person name="Wang O."/>
            <person name="Xia W.B."/>
            <person name="Xing X.P."/>
            <person name="Li M."/>
        </authorList>
    </citation>
    <scope>INVOLVEMENT IN OI14</scope>
    <scope>VARIANTS OI14 VAL-LEU-151 INS AND 169-TRP--GLU-291 DEL</scope>
</reference>
<name>TM38B_HUMAN</name>
<proteinExistence type="evidence at protein level"/>
<evidence type="ECO:0000250" key="1">
    <source>
        <dbReference type="UniProtKB" id="Q6GN30"/>
    </source>
</evidence>
<evidence type="ECO:0000250" key="2">
    <source>
        <dbReference type="UniProtKB" id="Q9DAV9"/>
    </source>
</evidence>
<evidence type="ECO:0000250" key="3">
    <source>
        <dbReference type="UniProtKB" id="Q9NA73"/>
    </source>
</evidence>
<evidence type="ECO:0000255" key="4"/>
<evidence type="ECO:0000256" key="5">
    <source>
        <dbReference type="SAM" id="MobiDB-lite"/>
    </source>
</evidence>
<evidence type="ECO:0000269" key="6">
    <source>
    </source>
</evidence>
<evidence type="ECO:0000269" key="7">
    <source>
    </source>
</evidence>
<evidence type="ECO:0000269" key="8">
    <source>
    </source>
</evidence>
<evidence type="ECO:0000303" key="9">
    <source>
    </source>
</evidence>
<evidence type="ECO:0000305" key="10"/>
<evidence type="ECO:0000312" key="11">
    <source>
        <dbReference type="HGNC" id="HGNC:25535"/>
    </source>
</evidence>
<evidence type="ECO:0007744" key="12">
    <source>
    </source>
</evidence>
<evidence type="ECO:0007744" key="13">
    <source>
    </source>
</evidence>
<dbReference type="EMBL" id="AK001355">
    <property type="protein sequence ID" value="BAA91645.1"/>
    <property type="molecule type" value="mRNA"/>
</dbReference>
<dbReference type="EMBL" id="CR457258">
    <property type="protein sequence ID" value="CAG33539.1"/>
    <property type="molecule type" value="mRNA"/>
</dbReference>
<dbReference type="EMBL" id="AL592437">
    <property type="status" value="NOT_ANNOTATED_CDS"/>
    <property type="molecule type" value="Genomic_DNA"/>
</dbReference>
<dbReference type="EMBL" id="AL592488">
    <property type="status" value="NOT_ANNOTATED_CDS"/>
    <property type="molecule type" value="Genomic_DNA"/>
</dbReference>
<dbReference type="EMBL" id="AL627247">
    <property type="status" value="NOT_ANNOTATED_CDS"/>
    <property type="molecule type" value="Genomic_DNA"/>
</dbReference>
<dbReference type="EMBL" id="BC000049">
    <property type="protein sequence ID" value="AAH00049.1"/>
    <property type="molecule type" value="mRNA"/>
</dbReference>
<dbReference type="CCDS" id="CCDS6768.1"/>
<dbReference type="RefSeq" id="NP_060582.1">
    <property type="nucleotide sequence ID" value="NM_018112.3"/>
</dbReference>
<dbReference type="SMR" id="Q9NVV0"/>
<dbReference type="BioGRID" id="120454">
    <property type="interactions" value="74"/>
</dbReference>
<dbReference type="FunCoup" id="Q9NVV0">
    <property type="interactions" value="1431"/>
</dbReference>
<dbReference type="IntAct" id="Q9NVV0">
    <property type="interactions" value="35"/>
</dbReference>
<dbReference type="MINT" id="Q9NVV0"/>
<dbReference type="STRING" id="9606.ENSP00000363824"/>
<dbReference type="TCDB" id="1.A.62.1.3">
    <property type="family name" value="the homotrimeric cation channel (tric) family"/>
</dbReference>
<dbReference type="iPTMnet" id="Q9NVV0"/>
<dbReference type="PhosphoSitePlus" id="Q9NVV0"/>
<dbReference type="SwissPalm" id="Q9NVV0"/>
<dbReference type="BioMuta" id="TMEM38B"/>
<dbReference type="DMDM" id="74753001"/>
<dbReference type="jPOST" id="Q9NVV0"/>
<dbReference type="MassIVE" id="Q9NVV0"/>
<dbReference type="PaxDb" id="9606-ENSP00000363824"/>
<dbReference type="PeptideAtlas" id="Q9NVV0"/>
<dbReference type="ProteomicsDB" id="82862"/>
<dbReference type="Pumba" id="Q9NVV0"/>
<dbReference type="Antibodypedia" id="14850">
    <property type="antibodies" value="99 antibodies from 25 providers"/>
</dbReference>
<dbReference type="DNASU" id="55151"/>
<dbReference type="Ensembl" id="ENST00000374692.8">
    <property type="protein sequence ID" value="ENSP00000363824.3"/>
    <property type="gene ID" value="ENSG00000095209.12"/>
</dbReference>
<dbReference type="GeneID" id="55151"/>
<dbReference type="KEGG" id="hsa:55151"/>
<dbReference type="MANE-Select" id="ENST00000374692.8">
    <property type="protein sequence ID" value="ENSP00000363824.3"/>
    <property type="RefSeq nucleotide sequence ID" value="NM_018112.3"/>
    <property type="RefSeq protein sequence ID" value="NP_060582.1"/>
</dbReference>
<dbReference type="UCSC" id="uc004bcu.3">
    <property type="organism name" value="human"/>
</dbReference>
<dbReference type="AGR" id="HGNC:25535"/>
<dbReference type="CTD" id="55151"/>
<dbReference type="DisGeNET" id="55151"/>
<dbReference type="GeneCards" id="TMEM38B"/>
<dbReference type="HGNC" id="HGNC:25535">
    <property type="gene designation" value="TMEM38B"/>
</dbReference>
<dbReference type="HPA" id="ENSG00000095209">
    <property type="expression patterns" value="Tissue enhanced (skeletal muscle, tongue)"/>
</dbReference>
<dbReference type="MalaCards" id="TMEM38B"/>
<dbReference type="MIM" id="611236">
    <property type="type" value="gene"/>
</dbReference>
<dbReference type="MIM" id="615066">
    <property type="type" value="phenotype"/>
</dbReference>
<dbReference type="neXtProt" id="NX_Q9NVV0"/>
<dbReference type="OpenTargets" id="ENSG00000095209"/>
<dbReference type="Orphanet" id="216820">
    <property type="disease" value="Osteogenesis imperfecta type 4"/>
</dbReference>
<dbReference type="PharmGKB" id="PA134916126"/>
<dbReference type="VEuPathDB" id="HostDB:ENSG00000095209"/>
<dbReference type="eggNOG" id="KOG3944">
    <property type="taxonomic scope" value="Eukaryota"/>
</dbReference>
<dbReference type="GeneTree" id="ENSGT00390000018845"/>
<dbReference type="HOGENOM" id="CLU_076376_0_0_1"/>
<dbReference type="InParanoid" id="Q9NVV0"/>
<dbReference type="OMA" id="HNELLRP"/>
<dbReference type="OrthoDB" id="195817at2759"/>
<dbReference type="PAN-GO" id="Q9NVV0">
    <property type="GO annotations" value="0 GO annotations based on evolutionary models"/>
</dbReference>
<dbReference type="PhylomeDB" id="Q9NVV0"/>
<dbReference type="TreeFam" id="TF313483"/>
<dbReference type="PathwayCommons" id="Q9NVV0"/>
<dbReference type="SignaLink" id="Q9NVV0"/>
<dbReference type="BioGRID-ORCS" id="55151">
    <property type="hits" value="12 hits in 1157 CRISPR screens"/>
</dbReference>
<dbReference type="ChiTaRS" id="TMEM38B">
    <property type="organism name" value="human"/>
</dbReference>
<dbReference type="GenomeRNAi" id="55151"/>
<dbReference type="Pharos" id="Q9NVV0">
    <property type="development level" value="Tbio"/>
</dbReference>
<dbReference type="PRO" id="PR:Q9NVV0"/>
<dbReference type="Proteomes" id="UP000005640">
    <property type="component" value="Chromosome 9"/>
</dbReference>
<dbReference type="RNAct" id="Q9NVV0">
    <property type="molecule type" value="protein"/>
</dbReference>
<dbReference type="Bgee" id="ENSG00000095209">
    <property type="expression patterns" value="Expressed in sperm and 187 other cell types or tissues"/>
</dbReference>
<dbReference type="ExpressionAtlas" id="Q9NVV0">
    <property type="expression patterns" value="baseline and differential"/>
</dbReference>
<dbReference type="GO" id="GO:0005783">
    <property type="term" value="C:endoplasmic reticulum"/>
    <property type="evidence" value="ECO:0000250"/>
    <property type="project" value="UniProtKB"/>
</dbReference>
<dbReference type="GO" id="GO:0031965">
    <property type="term" value="C:nuclear membrane"/>
    <property type="evidence" value="ECO:0000303"/>
    <property type="project" value="BHF-UCL"/>
</dbReference>
<dbReference type="GO" id="GO:0005634">
    <property type="term" value="C:nucleus"/>
    <property type="evidence" value="ECO:0007005"/>
    <property type="project" value="UniProtKB"/>
</dbReference>
<dbReference type="GO" id="GO:0033017">
    <property type="term" value="C:sarcoplasmic reticulum membrane"/>
    <property type="evidence" value="ECO:0000303"/>
    <property type="project" value="BHF-UCL"/>
</dbReference>
<dbReference type="GO" id="GO:0042802">
    <property type="term" value="F:identical protein binding"/>
    <property type="evidence" value="ECO:0007669"/>
    <property type="project" value="InterPro"/>
</dbReference>
<dbReference type="GO" id="GO:0005267">
    <property type="term" value="F:potassium channel activity"/>
    <property type="evidence" value="ECO:0000250"/>
    <property type="project" value="UniProtKB"/>
</dbReference>
<dbReference type="GO" id="GO:0060348">
    <property type="term" value="P:bone development"/>
    <property type="evidence" value="ECO:0007669"/>
    <property type="project" value="Ensembl"/>
</dbReference>
<dbReference type="GO" id="GO:0030282">
    <property type="term" value="P:bone mineralization"/>
    <property type="evidence" value="ECO:0007669"/>
    <property type="project" value="Ensembl"/>
</dbReference>
<dbReference type="GO" id="GO:0071313">
    <property type="term" value="P:cellular response to caffeine"/>
    <property type="evidence" value="ECO:0007669"/>
    <property type="project" value="Ensembl"/>
</dbReference>
<dbReference type="GO" id="GO:0007029">
    <property type="term" value="P:endoplasmic reticulum organization"/>
    <property type="evidence" value="ECO:0007669"/>
    <property type="project" value="Ensembl"/>
</dbReference>
<dbReference type="GO" id="GO:0051649">
    <property type="term" value="P:establishment of localization in cell"/>
    <property type="evidence" value="ECO:0007669"/>
    <property type="project" value="Ensembl"/>
</dbReference>
<dbReference type="GO" id="GO:0070278">
    <property type="term" value="P:extracellular matrix constituent secretion"/>
    <property type="evidence" value="ECO:0007669"/>
    <property type="project" value="Ensembl"/>
</dbReference>
<dbReference type="GO" id="GO:0048286">
    <property type="term" value="P:lung alveolus development"/>
    <property type="evidence" value="ECO:0007669"/>
    <property type="project" value="Ensembl"/>
</dbReference>
<dbReference type="GO" id="GO:0060487">
    <property type="term" value="P:lung epithelial cell differentiation"/>
    <property type="evidence" value="ECO:0007669"/>
    <property type="project" value="Ensembl"/>
</dbReference>
<dbReference type="GO" id="GO:0008654">
    <property type="term" value="P:phospholipid biosynthetic process"/>
    <property type="evidence" value="ECO:0007669"/>
    <property type="project" value="Ensembl"/>
</dbReference>
<dbReference type="GO" id="GO:0010881">
    <property type="term" value="P:regulation of cardiac muscle contraction by regulation of the release of sequestered calcium ion"/>
    <property type="evidence" value="ECO:0007669"/>
    <property type="project" value="Ensembl"/>
</dbReference>
<dbReference type="GO" id="GO:0051279">
    <property type="term" value="P:regulation of release of sequestered calcium ion into cytosol"/>
    <property type="evidence" value="ECO:0000250"/>
    <property type="project" value="UniProtKB"/>
</dbReference>
<dbReference type="GO" id="GO:0014808">
    <property type="term" value="P:release of sequestered calcium ion into cytosol by sarcoplasmic reticulum"/>
    <property type="evidence" value="ECO:0007669"/>
    <property type="project" value="Ensembl"/>
</dbReference>
<dbReference type="GO" id="GO:0061033">
    <property type="term" value="P:secretion by lung epithelial cell involved in lung growth"/>
    <property type="evidence" value="ECO:0007669"/>
    <property type="project" value="Ensembl"/>
</dbReference>
<dbReference type="InterPro" id="IPR007866">
    <property type="entry name" value="TRIC_channel"/>
</dbReference>
<dbReference type="PANTHER" id="PTHR12454">
    <property type="entry name" value="TRIMERIC INTRACELLULAR CATION CHANNEL"/>
    <property type="match status" value="1"/>
</dbReference>
<dbReference type="PANTHER" id="PTHR12454:SF5">
    <property type="entry name" value="TRIMERIC INTRACELLULAR CATION CHANNEL TYPE B"/>
    <property type="match status" value="1"/>
</dbReference>
<dbReference type="Pfam" id="PF05197">
    <property type="entry name" value="TRIC"/>
    <property type="match status" value="1"/>
</dbReference>
<sequence length="291" mass="32510">MDSPWDELALAFSRTSMFPFFDIAHYLVSVMAVKRQPGAAALAWKNPISSWFTAMLHCFGGGILSCLLLAEPPLKFLANHTNILLASSIWYITFFCPHDLVSQGYSYLPVQLLASGMKEVTRTWKIVGGVTHANSYYKNGWIVMIAIGWARGAGGTIITNFERLVKGDWKPEGDEWLKMSYPAKVTLLGSVIFTFQHTQHLAISKHNLMFLYTIFIVATKITMMTTQTSTMTFAPFEDTLSWMLFGWQQPFSSCEKKSEAKSPSNGVGSLASKPVDVASDNVKKKHTKKNE</sequence>